<protein>
    <recommendedName>
        <fullName>Uncharacterized GST-like protein YibF</fullName>
    </recommendedName>
</protein>
<sequence>MKLVGSYTSPFVRKLSILLLEKGITFEFINELPYNADNGVAQFNPLGKVPVLVTEEGECWFDSPIIAEYIELMNVAPAMLPRDPLESLRVRKIEALADGIMDAGLVSVREQARPAAQQSEDELLRQREKINRSLDVLEGYLVDGTLKTDTVNLATIAIACAVGYLNFRRVAPGWCVDRPHLVKLVENLFSRESFARTEPPKA</sequence>
<comment type="function">
    <text>Glutathione (GSH) transferase homolog, that might be involved in selenium metabolism.</text>
</comment>
<comment type="similarity">
    <text evidence="2">Belongs to the GST superfamily. HSP26 family.</text>
</comment>
<dbReference type="EMBL" id="L19044">
    <property type="protein sequence ID" value="AAC95064.1"/>
    <property type="molecule type" value="Genomic_DNA"/>
</dbReference>
<dbReference type="EMBL" id="U16247">
    <property type="protein sequence ID" value="AAA56754.1"/>
    <property type="molecule type" value="Genomic_DNA"/>
</dbReference>
<dbReference type="EMBL" id="U00039">
    <property type="protein sequence ID" value="AAB18569.1"/>
    <property type="molecule type" value="Genomic_DNA"/>
</dbReference>
<dbReference type="EMBL" id="U00096">
    <property type="protein sequence ID" value="AAC76616.1"/>
    <property type="molecule type" value="Genomic_DNA"/>
</dbReference>
<dbReference type="EMBL" id="AP009048">
    <property type="protein sequence ID" value="BAE77701.1"/>
    <property type="molecule type" value="Genomic_DNA"/>
</dbReference>
<dbReference type="PIR" id="S47813">
    <property type="entry name" value="S47813"/>
</dbReference>
<dbReference type="RefSeq" id="NP_418049.1">
    <property type="nucleotide sequence ID" value="NC_000913.3"/>
</dbReference>
<dbReference type="RefSeq" id="WP_000779792.1">
    <property type="nucleotide sequence ID" value="NZ_STEB01000018.1"/>
</dbReference>
<dbReference type="PDB" id="3R2Q">
    <property type="method" value="X-ray"/>
    <property type="resolution" value="1.05 A"/>
    <property type="chains" value="A=1-202"/>
</dbReference>
<dbReference type="PDBsum" id="3R2Q"/>
<dbReference type="SMR" id="P0ACA1"/>
<dbReference type="BioGRID" id="4261877">
    <property type="interactions" value="22"/>
</dbReference>
<dbReference type="BioGRID" id="852420">
    <property type="interactions" value="1"/>
</dbReference>
<dbReference type="FunCoup" id="P0ACA1">
    <property type="interactions" value="34"/>
</dbReference>
<dbReference type="IntAct" id="P0ACA1">
    <property type="interactions" value="2"/>
</dbReference>
<dbReference type="STRING" id="511145.b3592"/>
<dbReference type="jPOST" id="P0ACA1"/>
<dbReference type="PaxDb" id="511145-b3592"/>
<dbReference type="EnsemblBacteria" id="AAC76616">
    <property type="protein sequence ID" value="AAC76616"/>
    <property type="gene ID" value="b3592"/>
</dbReference>
<dbReference type="GeneID" id="948113"/>
<dbReference type="KEGG" id="ecj:JW3565"/>
<dbReference type="KEGG" id="eco:b3592"/>
<dbReference type="KEGG" id="ecoc:C3026_19475"/>
<dbReference type="PATRIC" id="fig|1411691.4.peg.3119"/>
<dbReference type="EchoBASE" id="EB1712"/>
<dbReference type="eggNOG" id="COG0625">
    <property type="taxonomic scope" value="Bacteria"/>
</dbReference>
<dbReference type="HOGENOM" id="CLU_011226_12_3_6"/>
<dbReference type="InParanoid" id="P0ACA1"/>
<dbReference type="OMA" id="SRVICRY"/>
<dbReference type="OrthoDB" id="8634103at2"/>
<dbReference type="PhylomeDB" id="P0ACA1"/>
<dbReference type="BioCyc" id="EcoCyc:EG11762-MONOMER"/>
<dbReference type="EvolutionaryTrace" id="P0ACA1"/>
<dbReference type="PRO" id="PR:P0ACA1"/>
<dbReference type="Proteomes" id="UP000000625">
    <property type="component" value="Chromosome"/>
</dbReference>
<dbReference type="GO" id="GO:0005829">
    <property type="term" value="C:cytosol"/>
    <property type="evidence" value="ECO:0000314"/>
    <property type="project" value="EcoCyc"/>
</dbReference>
<dbReference type="GO" id="GO:0004364">
    <property type="term" value="F:glutathione transferase activity"/>
    <property type="evidence" value="ECO:0000318"/>
    <property type="project" value="GO_Central"/>
</dbReference>
<dbReference type="GO" id="GO:0016034">
    <property type="term" value="F:maleylacetoacetate isomerase activity"/>
    <property type="evidence" value="ECO:0000318"/>
    <property type="project" value="GO_Central"/>
</dbReference>
<dbReference type="GO" id="GO:0006749">
    <property type="term" value="P:glutathione metabolic process"/>
    <property type="evidence" value="ECO:0000318"/>
    <property type="project" value="GO_Central"/>
</dbReference>
<dbReference type="GO" id="GO:0006559">
    <property type="term" value="P:L-phenylalanine catabolic process"/>
    <property type="evidence" value="ECO:0000318"/>
    <property type="project" value="GO_Central"/>
</dbReference>
<dbReference type="CDD" id="cd03205">
    <property type="entry name" value="GST_C_6"/>
    <property type="match status" value="1"/>
</dbReference>
<dbReference type="FunFam" id="1.20.1050.10:FF:000011">
    <property type="entry name" value="Predicted glutathione S-transferase"/>
    <property type="match status" value="1"/>
</dbReference>
<dbReference type="FunFam" id="3.40.30.10:FF:000038">
    <property type="entry name" value="Predicted glutathione S-transferase"/>
    <property type="match status" value="1"/>
</dbReference>
<dbReference type="Gene3D" id="1.20.1050.10">
    <property type="match status" value="1"/>
</dbReference>
<dbReference type="Gene3D" id="3.40.30.10">
    <property type="entry name" value="Glutaredoxin"/>
    <property type="match status" value="1"/>
</dbReference>
<dbReference type="InterPro" id="IPR010987">
    <property type="entry name" value="Glutathione-S-Trfase_C-like"/>
</dbReference>
<dbReference type="InterPro" id="IPR036282">
    <property type="entry name" value="Glutathione-S-Trfase_C_sf"/>
</dbReference>
<dbReference type="InterPro" id="IPR004045">
    <property type="entry name" value="Glutathione_S-Trfase_N"/>
</dbReference>
<dbReference type="InterPro" id="IPR004046">
    <property type="entry name" value="GST_C"/>
</dbReference>
<dbReference type="InterPro" id="IPR036249">
    <property type="entry name" value="Thioredoxin-like_sf"/>
</dbReference>
<dbReference type="NCBIfam" id="NF007682">
    <property type="entry name" value="PRK10357.1"/>
    <property type="match status" value="1"/>
</dbReference>
<dbReference type="PANTHER" id="PTHR42673">
    <property type="entry name" value="MALEYLACETOACETATE ISOMERASE"/>
    <property type="match status" value="1"/>
</dbReference>
<dbReference type="PANTHER" id="PTHR42673:SF4">
    <property type="entry name" value="MALEYLACETOACETATE ISOMERASE"/>
    <property type="match status" value="1"/>
</dbReference>
<dbReference type="Pfam" id="PF00043">
    <property type="entry name" value="GST_C"/>
    <property type="match status" value="1"/>
</dbReference>
<dbReference type="Pfam" id="PF13409">
    <property type="entry name" value="GST_N_2"/>
    <property type="match status" value="1"/>
</dbReference>
<dbReference type="SUPFAM" id="SSF47616">
    <property type="entry name" value="GST C-terminal domain-like"/>
    <property type="match status" value="1"/>
</dbReference>
<dbReference type="SUPFAM" id="SSF52833">
    <property type="entry name" value="Thioredoxin-like"/>
    <property type="match status" value="1"/>
</dbReference>
<dbReference type="PROSITE" id="PS50405">
    <property type="entry name" value="GST_CTER"/>
    <property type="match status" value="1"/>
</dbReference>
<dbReference type="PROSITE" id="PS50404">
    <property type="entry name" value="GST_NTER"/>
    <property type="match status" value="1"/>
</dbReference>
<keyword id="KW-0002">3D-structure</keyword>
<keyword id="KW-1185">Reference proteome</keyword>
<name>YIBF_ECOLI</name>
<organism>
    <name type="scientific">Escherichia coli (strain K12)</name>
    <dbReference type="NCBI Taxonomy" id="83333"/>
    <lineage>
        <taxon>Bacteria</taxon>
        <taxon>Pseudomonadati</taxon>
        <taxon>Pseudomonadota</taxon>
        <taxon>Gammaproteobacteria</taxon>
        <taxon>Enterobacterales</taxon>
        <taxon>Enterobacteriaceae</taxon>
        <taxon>Escherichia</taxon>
    </lineage>
</organism>
<evidence type="ECO:0000269" key="1">
    <source ref="7"/>
</evidence>
<evidence type="ECO:0000305" key="2"/>
<evidence type="ECO:0007829" key="3">
    <source>
        <dbReference type="PDB" id="3R2Q"/>
    </source>
</evidence>
<feature type="chain" id="PRO_0000185874" description="Uncharacterized GST-like protein YibF">
    <location>
        <begin position="1"/>
        <end position="202"/>
    </location>
</feature>
<feature type="domain" description="GST N-terminal">
    <location>
        <begin position="1"/>
        <end position="78"/>
    </location>
</feature>
<feature type="domain" description="GST C-terminal">
    <location>
        <begin position="83"/>
        <end position="202"/>
    </location>
</feature>
<feature type="binding site" evidence="1">
    <location>
        <position position="9"/>
    </location>
    <ligand>
        <name>glutathione</name>
        <dbReference type="ChEBI" id="CHEBI:57925"/>
    </ligand>
</feature>
<feature type="binding site" evidence="1">
    <location>
        <position position="49"/>
    </location>
    <ligand>
        <name>glutathione</name>
        <dbReference type="ChEBI" id="CHEBI:57925"/>
    </ligand>
</feature>
<feature type="binding site">
    <location>
        <begin position="62"/>
        <end position="63"/>
    </location>
    <ligand>
        <name>glutathione</name>
        <dbReference type="ChEBI" id="CHEBI:57925"/>
    </ligand>
</feature>
<feature type="sequence conflict" description="In Ref. 1." evidence="2" ref="1">
    <original>A</original>
    <variation>T</variation>
    <location>
        <position position="195"/>
    </location>
</feature>
<feature type="strand" evidence="3">
    <location>
        <begin position="2"/>
        <end position="5"/>
    </location>
</feature>
<feature type="helix" evidence="3">
    <location>
        <begin position="10"/>
        <end position="21"/>
    </location>
</feature>
<feature type="strand" evidence="3">
    <location>
        <begin position="27"/>
        <end position="30"/>
    </location>
</feature>
<feature type="strand" evidence="3">
    <location>
        <begin position="35"/>
        <end position="37"/>
    </location>
</feature>
<feature type="turn" evidence="3">
    <location>
        <begin position="41"/>
        <end position="43"/>
    </location>
</feature>
<feature type="strand" evidence="3">
    <location>
        <begin position="51"/>
        <end position="53"/>
    </location>
</feature>
<feature type="helix" evidence="3">
    <location>
        <begin position="63"/>
        <end position="72"/>
    </location>
</feature>
<feature type="helix" evidence="3">
    <location>
        <begin position="84"/>
        <end position="112"/>
    </location>
</feature>
<feature type="helix" evidence="3">
    <location>
        <begin position="115"/>
        <end position="117"/>
    </location>
</feature>
<feature type="helix" evidence="3">
    <location>
        <begin position="120"/>
        <end position="142"/>
    </location>
</feature>
<feature type="helix" evidence="3">
    <location>
        <begin position="153"/>
        <end position="168"/>
    </location>
</feature>
<feature type="turn" evidence="3">
    <location>
        <begin position="172"/>
        <end position="177"/>
    </location>
</feature>
<feature type="helix" evidence="3">
    <location>
        <begin position="179"/>
        <end position="189"/>
    </location>
</feature>
<feature type="helix" evidence="3">
    <location>
        <begin position="192"/>
        <end position="195"/>
    </location>
</feature>
<gene>
    <name type="primary">yibF</name>
    <name type="ordered locus">b3592</name>
    <name type="ordered locus">JW3565</name>
</gene>
<proteinExistence type="evidence at protein level"/>
<accession>P0ACA1</accession>
<accession>P32105</accession>
<accession>Q2M7Q5</accession>
<reference key="1">
    <citation type="journal article" date="1993" name="J. Bacteriol.">
        <title>Rhs elements of Escherichia coli K-12: complex composites of shared and unique components that have different evolutionary histories.</title>
        <authorList>
            <person name="Zhao S."/>
            <person name="Sandt C.H."/>
            <person name="Feulner G."/>
            <person name="Vlazny D.A."/>
            <person name="Gray J.A."/>
            <person name="Hill C.W."/>
        </authorList>
    </citation>
    <scope>NUCLEOTIDE SEQUENCE [GENOMIC DNA]</scope>
    <source>
        <strain>K12</strain>
    </source>
</reference>
<reference key="2">
    <citation type="journal article" date="1995" name="Genetics">
        <title>Correlation of Rhs elements with Escherichia coli population structure.</title>
        <authorList>
            <person name="Hill C.W."/>
            <person name="Feulner G."/>
            <person name="Brody M.S."/>
            <person name="Zhao S."/>
            <person name="Sadosky A.B."/>
            <person name="Sandt C.H."/>
        </authorList>
    </citation>
    <scope>NUCLEOTIDE SEQUENCE [GENOMIC DNA]</scope>
    <source>
        <strain>ECOR 32</strain>
    </source>
</reference>
<reference key="3">
    <citation type="journal article" date="1994" name="Nucleic Acids Res.">
        <title>Analysis of the Escherichia coli genome. V. DNA sequence of the region from 76.0 to 81.5 minutes.</title>
        <authorList>
            <person name="Sofia H.J."/>
            <person name="Burland V."/>
            <person name="Daniels D.L."/>
            <person name="Plunkett G. III"/>
            <person name="Blattner F.R."/>
        </authorList>
    </citation>
    <scope>NUCLEOTIDE SEQUENCE [LARGE SCALE GENOMIC DNA]</scope>
    <source>
        <strain>K12 / MG1655 / ATCC 47076</strain>
    </source>
</reference>
<reference key="4">
    <citation type="journal article" date="1997" name="Science">
        <title>The complete genome sequence of Escherichia coli K-12.</title>
        <authorList>
            <person name="Blattner F.R."/>
            <person name="Plunkett G. III"/>
            <person name="Bloch C.A."/>
            <person name="Perna N.T."/>
            <person name="Burland V."/>
            <person name="Riley M."/>
            <person name="Collado-Vides J."/>
            <person name="Glasner J.D."/>
            <person name="Rode C.K."/>
            <person name="Mayhew G.F."/>
            <person name="Gregor J."/>
            <person name="Davis N.W."/>
            <person name="Kirkpatrick H.A."/>
            <person name="Goeden M.A."/>
            <person name="Rose D.J."/>
            <person name="Mau B."/>
            <person name="Shao Y."/>
        </authorList>
    </citation>
    <scope>NUCLEOTIDE SEQUENCE [LARGE SCALE GENOMIC DNA]</scope>
    <source>
        <strain>K12 / MG1655 / ATCC 47076</strain>
    </source>
</reference>
<reference key="5">
    <citation type="journal article" date="2006" name="Mol. Syst. Biol.">
        <title>Highly accurate genome sequences of Escherichia coli K-12 strains MG1655 and W3110.</title>
        <authorList>
            <person name="Hayashi K."/>
            <person name="Morooka N."/>
            <person name="Yamamoto Y."/>
            <person name="Fujita K."/>
            <person name="Isono K."/>
            <person name="Choi S."/>
            <person name="Ohtsubo E."/>
            <person name="Baba T."/>
            <person name="Wanner B.L."/>
            <person name="Mori H."/>
            <person name="Horiuchi T."/>
        </authorList>
    </citation>
    <scope>NUCLEOTIDE SEQUENCE [LARGE SCALE GENOMIC DNA]</scope>
    <source>
        <strain>K12 / W3110 / ATCC 27325 / DSM 5911</strain>
    </source>
</reference>
<reference key="6">
    <citation type="journal article" date="2003" name="Proteins">
        <title>Conserved structural elements in glutathione transferase homologues encoded in the genome of Escherichia coli.</title>
        <authorList>
            <person name="Rife C.L."/>
            <person name="Parsons J.F."/>
            <person name="Xiao G."/>
            <person name="Gilliland G.L."/>
            <person name="Armstrong R.N."/>
        </authorList>
    </citation>
    <scope>PUTATIVE FUNCTION IN SELENIUM BIOCHEMISTRY</scope>
</reference>
<reference key="7">
    <citation type="submission" date="2012-03" db="PDB data bank">
        <title>Structural and functional genomics of YibF, a glutathione transferase homologue from Escherichia coli.</title>
        <authorList>
            <person name="Ladner J.E."/>
            <person name="Stournan N.V."/>
            <person name="Branch M.C."/>
            <person name="Harp J."/>
            <person name="Schaab M."/>
            <person name="Brown D.W."/>
            <person name="Armstrong R.N."/>
        </authorList>
    </citation>
    <scope>X-RAY CRYSTALLOGRAPHY (1.05 ANGSTROMS) IN COMPLEX WITH GLUTATHIONE</scope>
</reference>